<comment type="function">
    <text evidence="1">Required for accurate and efficient protein synthesis under certain stress conditions. May act as a fidelity factor of the translation reaction, by catalyzing a one-codon backward translocation of tRNAs on improperly translocated ribosomes. Back-translocation proceeds from a post-translocation (POST) complex to a pre-translocation (PRE) complex, thus giving elongation factor G a second chance to translocate the tRNAs correctly. Binds to ribosomes in a GTP-dependent manner.</text>
</comment>
<comment type="catalytic activity">
    <reaction evidence="1">
        <text>GTP + H2O = GDP + phosphate + H(+)</text>
        <dbReference type="Rhea" id="RHEA:19669"/>
        <dbReference type="ChEBI" id="CHEBI:15377"/>
        <dbReference type="ChEBI" id="CHEBI:15378"/>
        <dbReference type="ChEBI" id="CHEBI:37565"/>
        <dbReference type="ChEBI" id="CHEBI:43474"/>
        <dbReference type="ChEBI" id="CHEBI:58189"/>
        <dbReference type="EC" id="3.6.5.n1"/>
    </reaction>
</comment>
<comment type="subcellular location">
    <subcellularLocation>
        <location evidence="1">Cell inner membrane</location>
        <topology evidence="1">Peripheral membrane protein</topology>
        <orientation evidence="1">Cytoplasmic side</orientation>
    </subcellularLocation>
</comment>
<comment type="similarity">
    <text evidence="1">Belongs to the TRAFAC class translation factor GTPase superfamily. Classic translation factor GTPase family. LepA subfamily.</text>
</comment>
<gene>
    <name evidence="1" type="primary">lepA</name>
    <name type="ordered locus">Clim_1677</name>
</gene>
<feature type="chain" id="PRO_1000092382" description="Elongation factor 4">
    <location>
        <begin position="1"/>
        <end position="605"/>
    </location>
</feature>
<feature type="domain" description="tr-type G">
    <location>
        <begin position="9"/>
        <end position="192"/>
    </location>
</feature>
<feature type="binding site" evidence="1">
    <location>
        <begin position="21"/>
        <end position="26"/>
    </location>
    <ligand>
        <name>GTP</name>
        <dbReference type="ChEBI" id="CHEBI:37565"/>
    </ligand>
</feature>
<feature type="binding site" evidence="1">
    <location>
        <begin position="139"/>
        <end position="142"/>
    </location>
    <ligand>
        <name>GTP</name>
        <dbReference type="ChEBI" id="CHEBI:37565"/>
    </ligand>
</feature>
<keyword id="KW-0997">Cell inner membrane</keyword>
<keyword id="KW-1003">Cell membrane</keyword>
<keyword id="KW-0342">GTP-binding</keyword>
<keyword id="KW-0378">Hydrolase</keyword>
<keyword id="KW-0472">Membrane</keyword>
<keyword id="KW-0547">Nucleotide-binding</keyword>
<keyword id="KW-0648">Protein biosynthesis</keyword>
<sequence length="605" mass="67708">MALPSQEVSRTRNFCIIAHIDHGKSTLADRLLEVTHTLDRTQMSSAQVLDDMDLEKERGITIKSHAVQMKFKAEDGQEYILNLIDTPGHVDFSYEVSRSLAACEGALLIVDATQGVEAQTIANLYLAIEAGLEIIPVMNKIDLPSSDVEGVASQIIDLIGVERDEILQVSAKAGTGIDKLMDAIIARIPSPKDNKHLPLRALIFDSVFDPYRGAVVYLRIVDGVLNKGDRVRFFANDHIYTADEIGTMSLKRQPKETLASGNVGYLICSIKDVKDAKVGDTVTHADTPASEPLSGYKDVKPMVYSGLYPVNSNEFEDLRESLEKLSLNDASLVYTPETSVALGFGFRCGFLGLLHMEIIQERLEREYGVNIITTVPNVEYRVILTNSDVIEVDNPSKMPDTTKINHVEEPYVSMQIITLSEYIGNIMKLGMERRGEYKNTDYLDSSRVIMHFEFPLGEIVFDFHDKLKSISKGYASMDYEYIGYRESDLVKLDVLLNGEPVDALSIIVHRSKAYEWGRKLCQKLKGIIPKQMYEVAIQAAIGSRVISRETISAMRKNVLAKCYGGDISRKRKLLEKQKEGKKRMKQVGRVEVPQEAFLAILNIDE</sequence>
<dbReference type="EC" id="3.6.5.n1" evidence="1"/>
<dbReference type="EMBL" id="CP001097">
    <property type="protein sequence ID" value="ACD90719.1"/>
    <property type="molecule type" value="Genomic_DNA"/>
</dbReference>
<dbReference type="RefSeq" id="WP_012466592.1">
    <property type="nucleotide sequence ID" value="NC_010803.1"/>
</dbReference>
<dbReference type="SMR" id="B3EE17"/>
<dbReference type="STRING" id="290315.Clim_1677"/>
<dbReference type="KEGG" id="cli:Clim_1677"/>
<dbReference type="eggNOG" id="COG0481">
    <property type="taxonomic scope" value="Bacteria"/>
</dbReference>
<dbReference type="HOGENOM" id="CLU_009995_3_3_10"/>
<dbReference type="OrthoDB" id="9801591at2"/>
<dbReference type="Proteomes" id="UP000008841">
    <property type="component" value="Chromosome"/>
</dbReference>
<dbReference type="GO" id="GO:0005886">
    <property type="term" value="C:plasma membrane"/>
    <property type="evidence" value="ECO:0007669"/>
    <property type="project" value="UniProtKB-SubCell"/>
</dbReference>
<dbReference type="GO" id="GO:0005525">
    <property type="term" value="F:GTP binding"/>
    <property type="evidence" value="ECO:0007669"/>
    <property type="project" value="UniProtKB-UniRule"/>
</dbReference>
<dbReference type="GO" id="GO:0003924">
    <property type="term" value="F:GTPase activity"/>
    <property type="evidence" value="ECO:0007669"/>
    <property type="project" value="UniProtKB-UniRule"/>
</dbReference>
<dbReference type="GO" id="GO:0043022">
    <property type="term" value="F:ribosome binding"/>
    <property type="evidence" value="ECO:0007669"/>
    <property type="project" value="UniProtKB-UniRule"/>
</dbReference>
<dbReference type="GO" id="GO:0003746">
    <property type="term" value="F:translation elongation factor activity"/>
    <property type="evidence" value="ECO:0007669"/>
    <property type="project" value="UniProtKB-UniRule"/>
</dbReference>
<dbReference type="GO" id="GO:0045727">
    <property type="term" value="P:positive regulation of translation"/>
    <property type="evidence" value="ECO:0007669"/>
    <property type="project" value="UniProtKB-UniRule"/>
</dbReference>
<dbReference type="CDD" id="cd03699">
    <property type="entry name" value="EF4_II"/>
    <property type="match status" value="1"/>
</dbReference>
<dbReference type="CDD" id="cd16260">
    <property type="entry name" value="EF4_III"/>
    <property type="match status" value="1"/>
</dbReference>
<dbReference type="CDD" id="cd01890">
    <property type="entry name" value="LepA"/>
    <property type="match status" value="1"/>
</dbReference>
<dbReference type="CDD" id="cd03709">
    <property type="entry name" value="lepA_C"/>
    <property type="match status" value="1"/>
</dbReference>
<dbReference type="FunFam" id="3.40.50.300:FF:000078">
    <property type="entry name" value="Elongation factor 4"/>
    <property type="match status" value="1"/>
</dbReference>
<dbReference type="FunFam" id="2.40.30.10:FF:000015">
    <property type="entry name" value="Translation factor GUF1, mitochondrial"/>
    <property type="match status" value="1"/>
</dbReference>
<dbReference type="FunFam" id="3.30.70.240:FF:000007">
    <property type="entry name" value="Translation factor GUF1, mitochondrial"/>
    <property type="match status" value="1"/>
</dbReference>
<dbReference type="FunFam" id="3.30.70.2570:FF:000001">
    <property type="entry name" value="Translation factor GUF1, mitochondrial"/>
    <property type="match status" value="1"/>
</dbReference>
<dbReference type="FunFam" id="3.30.70.870:FF:000004">
    <property type="entry name" value="Translation factor GUF1, mitochondrial"/>
    <property type="match status" value="1"/>
</dbReference>
<dbReference type="Gene3D" id="3.30.70.240">
    <property type="match status" value="1"/>
</dbReference>
<dbReference type="Gene3D" id="3.30.70.2570">
    <property type="entry name" value="Elongation factor 4, C-terminal domain"/>
    <property type="match status" value="1"/>
</dbReference>
<dbReference type="Gene3D" id="3.30.70.870">
    <property type="entry name" value="Elongation Factor G (Translational Gtpase), domain 3"/>
    <property type="match status" value="1"/>
</dbReference>
<dbReference type="Gene3D" id="3.40.50.300">
    <property type="entry name" value="P-loop containing nucleotide triphosphate hydrolases"/>
    <property type="match status" value="1"/>
</dbReference>
<dbReference type="Gene3D" id="2.40.30.10">
    <property type="entry name" value="Translation factors"/>
    <property type="match status" value="1"/>
</dbReference>
<dbReference type="HAMAP" id="MF_00071">
    <property type="entry name" value="LepA"/>
    <property type="match status" value="1"/>
</dbReference>
<dbReference type="InterPro" id="IPR006297">
    <property type="entry name" value="EF-4"/>
</dbReference>
<dbReference type="InterPro" id="IPR035647">
    <property type="entry name" value="EFG_III/V"/>
</dbReference>
<dbReference type="InterPro" id="IPR000640">
    <property type="entry name" value="EFG_V-like"/>
</dbReference>
<dbReference type="InterPro" id="IPR004161">
    <property type="entry name" value="EFTu-like_2"/>
</dbReference>
<dbReference type="InterPro" id="IPR038363">
    <property type="entry name" value="LepA_C_sf"/>
</dbReference>
<dbReference type="InterPro" id="IPR013842">
    <property type="entry name" value="LepA_CTD"/>
</dbReference>
<dbReference type="InterPro" id="IPR035654">
    <property type="entry name" value="LepA_IV"/>
</dbReference>
<dbReference type="InterPro" id="IPR027417">
    <property type="entry name" value="P-loop_NTPase"/>
</dbReference>
<dbReference type="InterPro" id="IPR005225">
    <property type="entry name" value="Small_GTP-bd"/>
</dbReference>
<dbReference type="InterPro" id="IPR000795">
    <property type="entry name" value="T_Tr_GTP-bd_dom"/>
</dbReference>
<dbReference type="InterPro" id="IPR009000">
    <property type="entry name" value="Transl_B-barrel_sf"/>
</dbReference>
<dbReference type="NCBIfam" id="TIGR01393">
    <property type="entry name" value="lepA"/>
    <property type="match status" value="1"/>
</dbReference>
<dbReference type="NCBIfam" id="TIGR00231">
    <property type="entry name" value="small_GTP"/>
    <property type="match status" value="1"/>
</dbReference>
<dbReference type="PANTHER" id="PTHR43512:SF4">
    <property type="entry name" value="TRANSLATION FACTOR GUF1 HOMOLOG, CHLOROPLASTIC"/>
    <property type="match status" value="1"/>
</dbReference>
<dbReference type="PANTHER" id="PTHR43512">
    <property type="entry name" value="TRANSLATION FACTOR GUF1-RELATED"/>
    <property type="match status" value="1"/>
</dbReference>
<dbReference type="Pfam" id="PF00679">
    <property type="entry name" value="EFG_C"/>
    <property type="match status" value="1"/>
</dbReference>
<dbReference type="Pfam" id="PF00009">
    <property type="entry name" value="GTP_EFTU"/>
    <property type="match status" value="1"/>
</dbReference>
<dbReference type="Pfam" id="PF03144">
    <property type="entry name" value="GTP_EFTU_D2"/>
    <property type="match status" value="1"/>
</dbReference>
<dbReference type="Pfam" id="PF06421">
    <property type="entry name" value="LepA_C"/>
    <property type="match status" value="1"/>
</dbReference>
<dbReference type="PRINTS" id="PR00315">
    <property type="entry name" value="ELONGATNFCT"/>
</dbReference>
<dbReference type="SUPFAM" id="SSF54980">
    <property type="entry name" value="EF-G C-terminal domain-like"/>
    <property type="match status" value="2"/>
</dbReference>
<dbReference type="SUPFAM" id="SSF52540">
    <property type="entry name" value="P-loop containing nucleoside triphosphate hydrolases"/>
    <property type="match status" value="1"/>
</dbReference>
<dbReference type="SUPFAM" id="SSF50447">
    <property type="entry name" value="Translation proteins"/>
    <property type="match status" value="1"/>
</dbReference>
<dbReference type="PROSITE" id="PS51722">
    <property type="entry name" value="G_TR_2"/>
    <property type="match status" value="1"/>
</dbReference>
<accession>B3EE17</accession>
<evidence type="ECO:0000255" key="1">
    <source>
        <dbReference type="HAMAP-Rule" id="MF_00071"/>
    </source>
</evidence>
<protein>
    <recommendedName>
        <fullName evidence="1">Elongation factor 4</fullName>
        <shortName evidence="1">EF-4</shortName>
        <ecNumber evidence="1">3.6.5.n1</ecNumber>
    </recommendedName>
    <alternativeName>
        <fullName evidence="1">Ribosomal back-translocase LepA</fullName>
    </alternativeName>
</protein>
<reference key="1">
    <citation type="submission" date="2008-05" db="EMBL/GenBank/DDBJ databases">
        <title>Complete sequence of Chlorobium limicola DSM 245.</title>
        <authorList>
            <consortium name="US DOE Joint Genome Institute"/>
            <person name="Lucas S."/>
            <person name="Copeland A."/>
            <person name="Lapidus A."/>
            <person name="Glavina del Rio T."/>
            <person name="Dalin E."/>
            <person name="Tice H."/>
            <person name="Bruce D."/>
            <person name="Goodwin L."/>
            <person name="Pitluck S."/>
            <person name="Schmutz J."/>
            <person name="Larimer F."/>
            <person name="Land M."/>
            <person name="Hauser L."/>
            <person name="Kyrpides N."/>
            <person name="Ovchinnikova G."/>
            <person name="Zhao F."/>
            <person name="Li T."/>
            <person name="Liu Z."/>
            <person name="Overmann J."/>
            <person name="Bryant D.A."/>
            <person name="Richardson P."/>
        </authorList>
    </citation>
    <scope>NUCLEOTIDE SEQUENCE [LARGE SCALE GENOMIC DNA]</scope>
    <source>
        <strain>DSM 245 / NBRC 103803 / 6330</strain>
    </source>
</reference>
<proteinExistence type="inferred from homology"/>
<organism>
    <name type="scientific">Chlorobium limicola (strain DSM 245 / NBRC 103803 / 6330)</name>
    <dbReference type="NCBI Taxonomy" id="290315"/>
    <lineage>
        <taxon>Bacteria</taxon>
        <taxon>Pseudomonadati</taxon>
        <taxon>Chlorobiota</taxon>
        <taxon>Chlorobiia</taxon>
        <taxon>Chlorobiales</taxon>
        <taxon>Chlorobiaceae</taxon>
        <taxon>Chlorobium/Pelodictyon group</taxon>
        <taxon>Chlorobium</taxon>
    </lineage>
</organism>
<name>LEPA_CHLL2</name>